<sequence length="563" mass="65865">MANSSFIGDHVHGAPHAVMPEVEFPDQFFTVLTMDHELVTLRDVVINFSQEEWEYLDSAQRNLYWDVMMENYSNLLSLDLESRNETKHLSVGKDIIQNTGSQWEVMESSKLCGLEGSIFRNDWQSKSKIDLQGPEVGYFSQMKIISENVPSYKTHESLTLPRRTHDSEKPYEYKEYEKVFSCDLEFDEYQKIHTGGKNYECNQCWKTFGIDNSSMLQLNIHTGVKPCKYMEYGNTCSFYKDFNVYQKIHNEKFYKCKEYRRTFERVGKVTPLQRVHDGEKHFECSFCGKSFRVHAQLTRHQKIHTDEKTYKCMECGKDFRFHSQLTEHQRIHTGEKPYKCMHCEKVFRISSQLIEHQRIHTGEKPYACKECGKAFGVCRELARHQRIHTGKKPYECKACGKVFRNSSSLTRHQRIHTGEKPYKCKECEKAFGVGSELTRHERIHSGQKPYECKECGKFFRLTSALIQHQRIHSGEKPYECKVCGKAFRHSSALTEHQRIHTGEKPYECKACGKAFRHSSSFTKHQRIHTDDKPYECKECGNSFSVVGHLTCQPKIYTGEKSFD</sequence>
<reference key="1">
    <citation type="journal article" date="2004" name="Nat. Genet.">
        <title>Complete sequencing and characterization of 21,243 full-length human cDNAs.</title>
        <authorList>
            <person name="Ota T."/>
            <person name="Suzuki Y."/>
            <person name="Nishikawa T."/>
            <person name="Otsuki T."/>
            <person name="Sugiyama T."/>
            <person name="Irie R."/>
            <person name="Wakamatsu A."/>
            <person name="Hayashi K."/>
            <person name="Sato H."/>
            <person name="Nagai K."/>
            <person name="Kimura K."/>
            <person name="Makita H."/>
            <person name="Sekine M."/>
            <person name="Obayashi M."/>
            <person name="Nishi T."/>
            <person name="Shibahara T."/>
            <person name="Tanaka T."/>
            <person name="Ishii S."/>
            <person name="Yamamoto J."/>
            <person name="Saito K."/>
            <person name="Kawai Y."/>
            <person name="Isono Y."/>
            <person name="Nakamura Y."/>
            <person name="Nagahari K."/>
            <person name="Murakami K."/>
            <person name="Yasuda T."/>
            <person name="Iwayanagi T."/>
            <person name="Wagatsuma M."/>
            <person name="Shiratori A."/>
            <person name="Sudo H."/>
            <person name="Hosoiri T."/>
            <person name="Kaku Y."/>
            <person name="Kodaira H."/>
            <person name="Kondo H."/>
            <person name="Sugawara M."/>
            <person name="Takahashi M."/>
            <person name="Kanda K."/>
            <person name="Yokoi T."/>
            <person name="Furuya T."/>
            <person name="Kikkawa E."/>
            <person name="Omura Y."/>
            <person name="Abe K."/>
            <person name="Kamihara K."/>
            <person name="Katsuta N."/>
            <person name="Sato K."/>
            <person name="Tanikawa M."/>
            <person name="Yamazaki M."/>
            <person name="Ninomiya K."/>
            <person name="Ishibashi T."/>
            <person name="Yamashita H."/>
            <person name="Murakawa K."/>
            <person name="Fujimori K."/>
            <person name="Tanai H."/>
            <person name="Kimata M."/>
            <person name="Watanabe M."/>
            <person name="Hiraoka S."/>
            <person name="Chiba Y."/>
            <person name="Ishida S."/>
            <person name="Ono Y."/>
            <person name="Takiguchi S."/>
            <person name="Watanabe S."/>
            <person name="Yosida M."/>
            <person name="Hotuta T."/>
            <person name="Kusano J."/>
            <person name="Kanehori K."/>
            <person name="Takahashi-Fujii A."/>
            <person name="Hara H."/>
            <person name="Tanase T.-O."/>
            <person name="Nomura Y."/>
            <person name="Togiya S."/>
            <person name="Komai F."/>
            <person name="Hara R."/>
            <person name="Takeuchi K."/>
            <person name="Arita M."/>
            <person name="Imose N."/>
            <person name="Musashino K."/>
            <person name="Yuuki H."/>
            <person name="Oshima A."/>
            <person name="Sasaki N."/>
            <person name="Aotsuka S."/>
            <person name="Yoshikawa Y."/>
            <person name="Matsunawa H."/>
            <person name="Ichihara T."/>
            <person name="Shiohata N."/>
            <person name="Sano S."/>
            <person name="Moriya S."/>
            <person name="Momiyama H."/>
            <person name="Satoh N."/>
            <person name="Takami S."/>
            <person name="Terashima Y."/>
            <person name="Suzuki O."/>
            <person name="Nakagawa S."/>
            <person name="Senoh A."/>
            <person name="Mizoguchi H."/>
            <person name="Goto Y."/>
            <person name="Shimizu F."/>
            <person name="Wakebe H."/>
            <person name="Hishigaki H."/>
            <person name="Watanabe T."/>
            <person name="Sugiyama A."/>
            <person name="Takemoto M."/>
            <person name="Kawakami B."/>
            <person name="Yamazaki M."/>
            <person name="Watanabe K."/>
            <person name="Kumagai A."/>
            <person name="Itakura S."/>
            <person name="Fukuzumi Y."/>
            <person name="Fujimori Y."/>
            <person name="Komiyama M."/>
            <person name="Tashiro H."/>
            <person name="Tanigami A."/>
            <person name="Fujiwara T."/>
            <person name="Ono T."/>
            <person name="Yamada K."/>
            <person name="Fujii Y."/>
            <person name="Ozaki K."/>
            <person name="Hirao M."/>
            <person name="Ohmori Y."/>
            <person name="Kawabata A."/>
            <person name="Hikiji T."/>
            <person name="Kobatake N."/>
            <person name="Inagaki H."/>
            <person name="Ikema Y."/>
            <person name="Okamoto S."/>
            <person name="Okitani R."/>
            <person name="Kawakami T."/>
            <person name="Noguchi S."/>
            <person name="Itoh T."/>
            <person name="Shigeta K."/>
            <person name="Senba T."/>
            <person name="Matsumura K."/>
            <person name="Nakajima Y."/>
            <person name="Mizuno T."/>
            <person name="Morinaga M."/>
            <person name="Sasaki M."/>
            <person name="Togashi T."/>
            <person name="Oyama M."/>
            <person name="Hata H."/>
            <person name="Watanabe M."/>
            <person name="Komatsu T."/>
            <person name="Mizushima-Sugano J."/>
            <person name="Satoh T."/>
            <person name="Shirai Y."/>
            <person name="Takahashi Y."/>
            <person name="Nakagawa K."/>
            <person name="Okumura K."/>
            <person name="Nagase T."/>
            <person name="Nomura N."/>
            <person name="Kikuchi H."/>
            <person name="Masuho Y."/>
            <person name="Yamashita R."/>
            <person name="Nakai K."/>
            <person name="Yada T."/>
            <person name="Nakamura Y."/>
            <person name="Ohara O."/>
            <person name="Isogai T."/>
            <person name="Sugano S."/>
        </authorList>
    </citation>
    <scope>NUCLEOTIDE SEQUENCE [LARGE SCALE MRNA]</scope>
    <source>
        <tissue>Colon</tissue>
    </source>
</reference>
<reference key="2">
    <citation type="journal article" date="2004" name="Nature">
        <title>The DNA sequence and biology of human chromosome 19.</title>
        <authorList>
            <person name="Grimwood J."/>
            <person name="Gordon L.A."/>
            <person name="Olsen A.S."/>
            <person name="Terry A."/>
            <person name="Schmutz J."/>
            <person name="Lamerdin J.E."/>
            <person name="Hellsten U."/>
            <person name="Goodstein D."/>
            <person name="Couronne O."/>
            <person name="Tran-Gyamfi M."/>
            <person name="Aerts A."/>
            <person name="Altherr M."/>
            <person name="Ashworth L."/>
            <person name="Bajorek E."/>
            <person name="Black S."/>
            <person name="Branscomb E."/>
            <person name="Caenepeel S."/>
            <person name="Carrano A.V."/>
            <person name="Caoile C."/>
            <person name="Chan Y.M."/>
            <person name="Christensen M."/>
            <person name="Cleland C.A."/>
            <person name="Copeland A."/>
            <person name="Dalin E."/>
            <person name="Dehal P."/>
            <person name="Denys M."/>
            <person name="Detter J.C."/>
            <person name="Escobar J."/>
            <person name="Flowers D."/>
            <person name="Fotopulos D."/>
            <person name="Garcia C."/>
            <person name="Georgescu A.M."/>
            <person name="Glavina T."/>
            <person name="Gomez M."/>
            <person name="Gonzales E."/>
            <person name="Groza M."/>
            <person name="Hammon N."/>
            <person name="Hawkins T."/>
            <person name="Haydu L."/>
            <person name="Ho I."/>
            <person name="Huang W."/>
            <person name="Israni S."/>
            <person name="Jett J."/>
            <person name="Kadner K."/>
            <person name="Kimball H."/>
            <person name="Kobayashi A."/>
            <person name="Larionov V."/>
            <person name="Leem S.-H."/>
            <person name="Lopez F."/>
            <person name="Lou Y."/>
            <person name="Lowry S."/>
            <person name="Malfatti S."/>
            <person name="Martinez D."/>
            <person name="McCready P.M."/>
            <person name="Medina C."/>
            <person name="Morgan J."/>
            <person name="Nelson K."/>
            <person name="Nolan M."/>
            <person name="Ovcharenko I."/>
            <person name="Pitluck S."/>
            <person name="Pollard M."/>
            <person name="Popkie A.P."/>
            <person name="Predki P."/>
            <person name="Quan G."/>
            <person name="Ramirez L."/>
            <person name="Rash S."/>
            <person name="Retterer J."/>
            <person name="Rodriguez A."/>
            <person name="Rogers S."/>
            <person name="Salamov A."/>
            <person name="Salazar A."/>
            <person name="She X."/>
            <person name="Smith D."/>
            <person name="Slezak T."/>
            <person name="Solovyev V."/>
            <person name="Thayer N."/>
            <person name="Tice H."/>
            <person name="Tsai M."/>
            <person name="Ustaszewska A."/>
            <person name="Vo N."/>
            <person name="Wagner M."/>
            <person name="Wheeler J."/>
            <person name="Wu K."/>
            <person name="Xie G."/>
            <person name="Yang J."/>
            <person name="Dubchak I."/>
            <person name="Furey T.S."/>
            <person name="DeJong P."/>
            <person name="Dickson M."/>
            <person name="Gordon D."/>
            <person name="Eichler E.E."/>
            <person name="Pennacchio L.A."/>
            <person name="Richardson P."/>
            <person name="Stubbs L."/>
            <person name="Rokhsar D.S."/>
            <person name="Myers R.M."/>
            <person name="Rubin E.M."/>
            <person name="Lucas S.M."/>
        </authorList>
    </citation>
    <scope>NUCLEOTIDE SEQUENCE [LARGE SCALE GENOMIC DNA]</scope>
</reference>
<reference key="3">
    <citation type="journal article" date="2004" name="Genome Res.">
        <title>The status, quality, and expansion of the NIH full-length cDNA project: the Mammalian Gene Collection (MGC).</title>
        <authorList>
            <consortium name="The MGC Project Team"/>
        </authorList>
    </citation>
    <scope>NUCLEOTIDE SEQUENCE [LARGE SCALE MRNA]</scope>
    <scope>VARIANT VAL-131</scope>
    <source>
        <tissue>Placenta</tissue>
    </source>
</reference>
<reference key="4">
    <citation type="journal article" date="2000" name="DNA Res.">
        <title>Prediction of the coding sequences of unidentified human genes. XVIII. The complete sequences of 100 new cDNA clones from brain which code for large proteins in vitro.</title>
        <authorList>
            <person name="Nagase T."/>
            <person name="Kikuno R."/>
            <person name="Nakayama M."/>
            <person name="Hirosawa M."/>
            <person name="Ohara O."/>
        </authorList>
    </citation>
    <scope>NUCLEOTIDE SEQUENCE [LARGE SCALE MRNA] OF 80-563</scope>
    <scope>VARIANT VAL-131</scope>
    <source>
        <tissue>Brain</tissue>
    </source>
</reference>
<reference key="5">
    <citation type="journal article" date="2017" name="Nat. Struct. Mol. Biol.">
        <title>Site-specific mapping of the human SUMO proteome reveals co-modification with phosphorylation.</title>
        <authorList>
            <person name="Hendriks I.A."/>
            <person name="Lyon D."/>
            <person name="Young C."/>
            <person name="Jensen L.J."/>
            <person name="Vertegaal A.C."/>
            <person name="Nielsen M.L."/>
        </authorList>
    </citation>
    <scope>SUMOYLATION [LARGE SCALE ANALYSIS] AT LYS-87 AND LYS-268</scope>
    <scope>IDENTIFICATION BY MASS SPECTROMETRY [LARGE SCALE ANALYSIS]</scope>
</reference>
<gene>
    <name type="primary">ZNF529</name>
    <name type="synonym">KIAA1615</name>
</gene>
<accession>Q6P280</accession>
<accession>K7EKE1</accession>
<accession>Q9H731</accession>
<accession>Q9HCF7</accession>
<dbReference type="EMBL" id="AK025110">
    <property type="protein sequence ID" value="BAB15068.1"/>
    <property type="status" value="ALT_FRAME"/>
    <property type="molecule type" value="mRNA"/>
</dbReference>
<dbReference type="EMBL" id="AC092295">
    <property type="status" value="NOT_ANNOTATED_CDS"/>
    <property type="molecule type" value="Genomic_DNA"/>
</dbReference>
<dbReference type="EMBL" id="BC064690">
    <property type="protein sequence ID" value="AAH64690.1"/>
    <property type="status" value="ALT_INIT"/>
    <property type="molecule type" value="mRNA"/>
</dbReference>
<dbReference type="EMBL" id="AB046835">
    <property type="protein sequence ID" value="BAB13441.1"/>
    <property type="molecule type" value="mRNA"/>
</dbReference>
<dbReference type="CCDS" id="CCDS54256.1"/>
<dbReference type="RefSeq" id="NP_001139121.1">
    <property type="nucleotide sequence ID" value="NM_001145649.2"/>
</dbReference>
<dbReference type="RefSeq" id="NP_001308280.1">
    <property type="nucleotide sequence ID" value="NM_001321351.1"/>
</dbReference>
<dbReference type="RefSeq" id="NP_066002.3">
    <property type="nucleotide sequence ID" value="NM_020951.5"/>
</dbReference>
<dbReference type="RefSeq" id="XP_006723365.1">
    <property type="nucleotide sequence ID" value="XM_006723302.5"/>
</dbReference>
<dbReference type="RefSeq" id="XP_011525466.1">
    <property type="nucleotide sequence ID" value="XM_011527164.4"/>
</dbReference>
<dbReference type="RefSeq" id="XP_011525469.1">
    <property type="nucleotide sequence ID" value="XM_011527167.2"/>
</dbReference>
<dbReference type="RefSeq" id="XP_016882530.1">
    <property type="nucleotide sequence ID" value="XM_017027041.1"/>
</dbReference>
<dbReference type="RefSeq" id="XP_016882531.1">
    <property type="nucleotide sequence ID" value="XM_017027042.1"/>
</dbReference>
<dbReference type="RefSeq" id="XP_016882532.1">
    <property type="nucleotide sequence ID" value="XM_017027043.1"/>
</dbReference>
<dbReference type="RefSeq" id="XP_016882533.1">
    <property type="nucleotide sequence ID" value="XM_017027044.1"/>
</dbReference>
<dbReference type="RefSeq" id="XP_054177544.1">
    <property type="nucleotide sequence ID" value="XM_054321569.1"/>
</dbReference>
<dbReference type="RefSeq" id="XP_054177545.1">
    <property type="nucleotide sequence ID" value="XM_054321570.1"/>
</dbReference>
<dbReference type="SMR" id="Q6P280"/>
<dbReference type="BioGRID" id="121735">
    <property type="interactions" value="7"/>
</dbReference>
<dbReference type="FunCoup" id="Q6P280">
    <property type="interactions" value="415"/>
</dbReference>
<dbReference type="IntAct" id="Q6P280">
    <property type="interactions" value="1"/>
</dbReference>
<dbReference type="STRING" id="9606.ENSP00000465578"/>
<dbReference type="GlyGen" id="Q6P280">
    <property type="glycosylation" value="1 site, 1 O-linked glycan (1 site)"/>
</dbReference>
<dbReference type="iPTMnet" id="Q6P280"/>
<dbReference type="PhosphoSitePlus" id="Q6P280"/>
<dbReference type="BioMuta" id="ZNF529"/>
<dbReference type="DMDM" id="519668652"/>
<dbReference type="jPOST" id="Q6P280"/>
<dbReference type="MassIVE" id="Q6P280"/>
<dbReference type="PaxDb" id="9606-ENSP00000465578"/>
<dbReference type="PeptideAtlas" id="Q6P280"/>
<dbReference type="ProteomicsDB" id="66882"/>
<dbReference type="Antibodypedia" id="29796">
    <property type="antibodies" value="91 antibodies from 18 providers"/>
</dbReference>
<dbReference type="DNASU" id="57711"/>
<dbReference type="Ensembl" id="ENST00000591340.6">
    <property type="protein sequence ID" value="ENSP00000465578.1"/>
    <property type="gene ID" value="ENSG00000186020.13"/>
</dbReference>
<dbReference type="GeneID" id="57711"/>
<dbReference type="KEGG" id="hsa:57711"/>
<dbReference type="MANE-Select" id="ENST00000591340.6">
    <property type="protein sequence ID" value="ENSP00000465578.1"/>
    <property type="RefSeq nucleotide sequence ID" value="NM_020951.5"/>
    <property type="RefSeq protein sequence ID" value="NP_066002.3"/>
</dbReference>
<dbReference type="UCSC" id="uc002oeg.5">
    <property type="organism name" value="human"/>
</dbReference>
<dbReference type="AGR" id="HGNC:29328"/>
<dbReference type="CTD" id="57711"/>
<dbReference type="DisGeNET" id="57711"/>
<dbReference type="GeneCards" id="ZNF529"/>
<dbReference type="HGNC" id="HGNC:29328">
    <property type="gene designation" value="ZNF529"/>
</dbReference>
<dbReference type="HPA" id="ENSG00000186020">
    <property type="expression patterns" value="Low tissue specificity"/>
</dbReference>
<dbReference type="neXtProt" id="NX_Q6P280"/>
<dbReference type="OpenTargets" id="ENSG00000186020"/>
<dbReference type="PharmGKB" id="PA134910867"/>
<dbReference type="VEuPathDB" id="HostDB:ENSG00000186020"/>
<dbReference type="eggNOG" id="KOG1721">
    <property type="taxonomic scope" value="Eukaryota"/>
</dbReference>
<dbReference type="GeneTree" id="ENSGT00940000163735"/>
<dbReference type="InParanoid" id="Q6P280"/>
<dbReference type="OMA" id="NYACNQC"/>
<dbReference type="OrthoDB" id="9547406at2759"/>
<dbReference type="PAN-GO" id="Q6P280">
    <property type="GO annotations" value="3 GO annotations based on evolutionary models"/>
</dbReference>
<dbReference type="PhylomeDB" id="Q6P280"/>
<dbReference type="TreeFam" id="TF341817"/>
<dbReference type="PathwayCommons" id="Q6P280"/>
<dbReference type="Reactome" id="R-HSA-212436">
    <property type="pathway name" value="Generic Transcription Pathway"/>
</dbReference>
<dbReference type="SignaLink" id="Q6P280"/>
<dbReference type="BioGRID-ORCS" id="57711">
    <property type="hits" value="17 hits in 1146 CRISPR screens"/>
</dbReference>
<dbReference type="ChiTaRS" id="ZNF529">
    <property type="organism name" value="human"/>
</dbReference>
<dbReference type="GenomeRNAi" id="57711"/>
<dbReference type="Pharos" id="Q6P280">
    <property type="development level" value="Tdark"/>
</dbReference>
<dbReference type="PRO" id="PR:Q6P280"/>
<dbReference type="Proteomes" id="UP000005640">
    <property type="component" value="Chromosome 19"/>
</dbReference>
<dbReference type="RNAct" id="Q6P280">
    <property type="molecule type" value="protein"/>
</dbReference>
<dbReference type="Bgee" id="ENSG00000186020">
    <property type="expression patterns" value="Expressed in endothelial cell and 196 other cell types or tissues"/>
</dbReference>
<dbReference type="ExpressionAtlas" id="Q6P280">
    <property type="expression patterns" value="baseline and differential"/>
</dbReference>
<dbReference type="GO" id="GO:0005634">
    <property type="term" value="C:nucleus"/>
    <property type="evidence" value="ECO:0000318"/>
    <property type="project" value="GO_Central"/>
</dbReference>
<dbReference type="GO" id="GO:0000981">
    <property type="term" value="F:DNA-binding transcription factor activity, RNA polymerase II-specific"/>
    <property type="evidence" value="ECO:0000318"/>
    <property type="project" value="GO_Central"/>
</dbReference>
<dbReference type="GO" id="GO:0000977">
    <property type="term" value="F:RNA polymerase II transcription regulatory region sequence-specific DNA binding"/>
    <property type="evidence" value="ECO:0000318"/>
    <property type="project" value="GO_Central"/>
</dbReference>
<dbReference type="GO" id="GO:0008270">
    <property type="term" value="F:zinc ion binding"/>
    <property type="evidence" value="ECO:0007669"/>
    <property type="project" value="UniProtKB-KW"/>
</dbReference>
<dbReference type="GO" id="GO:0006357">
    <property type="term" value="P:regulation of transcription by RNA polymerase II"/>
    <property type="evidence" value="ECO:0000318"/>
    <property type="project" value="GO_Central"/>
</dbReference>
<dbReference type="CDD" id="cd07765">
    <property type="entry name" value="KRAB_A-box"/>
    <property type="match status" value="1"/>
</dbReference>
<dbReference type="FunFam" id="3.30.160.60:FF:000295">
    <property type="entry name" value="zinc finger protein 19"/>
    <property type="match status" value="1"/>
</dbReference>
<dbReference type="FunFam" id="3.30.160.60:FF:002343">
    <property type="entry name" value="Zinc finger protein 33A"/>
    <property type="match status" value="1"/>
</dbReference>
<dbReference type="FunFam" id="3.30.160.60:FF:000842">
    <property type="entry name" value="Zinc finger protein 383"/>
    <property type="match status" value="1"/>
</dbReference>
<dbReference type="FunFam" id="3.30.160.60:FF:001174">
    <property type="entry name" value="zinc finger protein 527 isoform X1"/>
    <property type="match status" value="1"/>
</dbReference>
<dbReference type="FunFam" id="3.30.160.60:FF:003543">
    <property type="entry name" value="Zinc finger protein 529"/>
    <property type="match status" value="1"/>
</dbReference>
<dbReference type="FunFam" id="3.30.160.60:FF:002750">
    <property type="entry name" value="zinc finger protein 529 isoform X1"/>
    <property type="match status" value="2"/>
</dbReference>
<dbReference type="FunFam" id="3.30.160.60:FF:000737">
    <property type="entry name" value="Zinc finger protein 565"/>
    <property type="match status" value="3"/>
</dbReference>
<dbReference type="Gene3D" id="6.10.140.140">
    <property type="match status" value="1"/>
</dbReference>
<dbReference type="Gene3D" id="3.30.160.60">
    <property type="entry name" value="Classic Zinc Finger"/>
    <property type="match status" value="11"/>
</dbReference>
<dbReference type="InterPro" id="IPR001909">
    <property type="entry name" value="KRAB"/>
</dbReference>
<dbReference type="InterPro" id="IPR036051">
    <property type="entry name" value="KRAB_dom_sf"/>
</dbReference>
<dbReference type="InterPro" id="IPR036236">
    <property type="entry name" value="Znf_C2H2_sf"/>
</dbReference>
<dbReference type="InterPro" id="IPR013087">
    <property type="entry name" value="Znf_C2H2_type"/>
</dbReference>
<dbReference type="PANTHER" id="PTHR24399:SF75">
    <property type="entry name" value="ZFP14 ZINC FINGER PROTEIN-RELATED"/>
    <property type="match status" value="1"/>
</dbReference>
<dbReference type="PANTHER" id="PTHR24399">
    <property type="entry name" value="ZINC FINGER AND BTB DOMAIN-CONTAINING"/>
    <property type="match status" value="1"/>
</dbReference>
<dbReference type="Pfam" id="PF01352">
    <property type="entry name" value="KRAB"/>
    <property type="match status" value="1"/>
</dbReference>
<dbReference type="Pfam" id="PF00096">
    <property type="entry name" value="zf-C2H2"/>
    <property type="match status" value="9"/>
</dbReference>
<dbReference type="SMART" id="SM00349">
    <property type="entry name" value="KRAB"/>
    <property type="match status" value="1"/>
</dbReference>
<dbReference type="SMART" id="SM00355">
    <property type="entry name" value="ZnF_C2H2"/>
    <property type="match status" value="9"/>
</dbReference>
<dbReference type="SUPFAM" id="SSF57667">
    <property type="entry name" value="beta-beta-alpha zinc fingers"/>
    <property type="match status" value="8"/>
</dbReference>
<dbReference type="SUPFAM" id="SSF109640">
    <property type="entry name" value="KRAB domain (Kruppel-associated box)"/>
    <property type="match status" value="1"/>
</dbReference>
<dbReference type="PROSITE" id="PS50805">
    <property type="entry name" value="KRAB"/>
    <property type="match status" value="1"/>
</dbReference>
<dbReference type="PROSITE" id="PS00028">
    <property type="entry name" value="ZINC_FINGER_C2H2_1"/>
    <property type="match status" value="9"/>
</dbReference>
<dbReference type="PROSITE" id="PS50157">
    <property type="entry name" value="ZINC_FINGER_C2H2_2"/>
    <property type="match status" value="11"/>
</dbReference>
<evidence type="ECO:0000255" key="1">
    <source>
        <dbReference type="PROSITE-ProRule" id="PRU00042"/>
    </source>
</evidence>
<evidence type="ECO:0000255" key="2">
    <source>
        <dbReference type="PROSITE-ProRule" id="PRU00119"/>
    </source>
</evidence>
<evidence type="ECO:0000269" key="3">
    <source>
    </source>
</evidence>
<evidence type="ECO:0000269" key="4">
    <source>
    </source>
</evidence>
<evidence type="ECO:0000305" key="5"/>
<evidence type="ECO:0007744" key="6">
    <source>
    </source>
</evidence>
<comment type="function">
    <text>May be involved in transcriptional regulation.</text>
</comment>
<comment type="subcellular location">
    <subcellularLocation>
        <location evidence="5">Nucleus</location>
    </subcellularLocation>
</comment>
<comment type="similarity">
    <text evidence="5">Belongs to the krueppel C2H2-type zinc-finger protein family.</text>
</comment>
<comment type="sequence caution" evidence="5">
    <conflict type="erroneous initiation">
        <sequence resource="EMBL-CDS" id="AAH64690"/>
    </conflict>
    <text>Truncated N-terminus.</text>
</comment>
<comment type="sequence caution" evidence="5">
    <conflict type="frameshift">
        <sequence resource="EMBL-CDS" id="BAB15068"/>
    </conflict>
</comment>
<keyword id="KW-0238">DNA-binding</keyword>
<keyword id="KW-1017">Isopeptide bond</keyword>
<keyword id="KW-0479">Metal-binding</keyword>
<keyword id="KW-0539">Nucleus</keyword>
<keyword id="KW-1267">Proteomics identification</keyword>
<keyword id="KW-1185">Reference proteome</keyword>
<keyword id="KW-0677">Repeat</keyword>
<keyword id="KW-0804">Transcription</keyword>
<keyword id="KW-0805">Transcription regulation</keyword>
<keyword id="KW-0832">Ubl conjugation</keyword>
<keyword id="KW-0862">Zinc</keyword>
<keyword id="KW-0863">Zinc-finger</keyword>
<proteinExistence type="evidence at protein level"/>
<name>ZN529_HUMAN</name>
<feature type="chain" id="PRO_0000280419" description="Zinc finger protein 529">
    <location>
        <begin position="1"/>
        <end position="563"/>
    </location>
</feature>
<feature type="domain" description="KRAB" evidence="2">
    <location>
        <begin position="39"/>
        <end position="119"/>
    </location>
</feature>
<feature type="zinc finger region" description="C2H2-type 1; degenerate" evidence="1">
    <location>
        <begin position="199"/>
        <end position="221"/>
    </location>
</feature>
<feature type="zinc finger region" description="C2H2-type 2; degenerate" evidence="1">
    <location>
        <begin position="254"/>
        <end position="276"/>
    </location>
</feature>
<feature type="zinc finger region" description="C2H2-type 3" evidence="1">
    <location>
        <begin position="282"/>
        <end position="304"/>
    </location>
</feature>
<feature type="zinc finger region" description="C2H2-type 4" evidence="1">
    <location>
        <begin position="310"/>
        <end position="332"/>
    </location>
</feature>
<feature type="zinc finger region" description="C2H2-type 5" evidence="1">
    <location>
        <begin position="338"/>
        <end position="360"/>
    </location>
</feature>
<feature type="zinc finger region" description="C2H2-type 6" evidence="1">
    <location>
        <begin position="366"/>
        <end position="388"/>
    </location>
</feature>
<feature type="zinc finger region" description="C2H2-type 7" evidence="1">
    <location>
        <begin position="394"/>
        <end position="416"/>
    </location>
</feature>
<feature type="zinc finger region" description="C2H2-type 8" evidence="1">
    <location>
        <begin position="422"/>
        <end position="444"/>
    </location>
</feature>
<feature type="zinc finger region" description="C2H2-type 9" evidence="1">
    <location>
        <begin position="450"/>
        <end position="472"/>
    </location>
</feature>
<feature type="zinc finger region" description="C2H2-type 10" evidence="1">
    <location>
        <begin position="478"/>
        <end position="500"/>
    </location>
</feature>
<feature type="zinc finger region" description="C2H2-type 11" evidence="1">
    <location>
        <begin position="506"/>
        <end position="528"/>
    </location>
</feature>
<feature type="zinc finger region" description="C2H2-type 12; degenerate" evidence="1">
    <location>
        <begin position="534"/>
        <end position="556"/>
    </location>
</feature>
<feature type="cross-link" description="Glycyl lysine isopeptide (Lys-Gly) (interchain with G-Cter in SUMO2)" evidence="6">
    <location>
        <position position="87"/>
    </location>
</feature>
<feature type="cross-link" description="Glycyl lysine isopeptide (Lys-Gly) (interchain with G-Cter in SUMO2)" evidence="6">
    <location>
        <position position="268"/>
    </location>
</feature>
<feature type="sequence variant" id="VAR_031147" description="In dbSNP:rs2912444." evidence="3 4">
    <original>L</original>
    <variation>V</variation>
    <location>
        <position position="131"/>
    </location>
</feature>
<feature type="sequence conflict" description="In Ref. 1; BAB15068." evidence="5" ref="1">
    <original>D</original>
    <variation>N</variation>
    <location>
        <position position="79"/>
    </location>
</feature>
<feature type="sequence conflict" description="In Ref. 2; BAB13441." evidence="5" ref="2">
    <original>S</original>
    <variation>P</variation>
    <location>
        <position position="101"/>
    </location>
</feature>
<organism>
    <name type="scientific">Homo sapiens</name>
    <name type="common">Human</name>
    <dbReference type="NCBI Taxonomy" id="9606"/>
    <lineage>
        <taxon>Eukaryota</taxon>
        <taxon>Metazoa</taxon>
        <taxon>Chordata</taxon>
        <taxon>Craniata</taxon>
        <taxon>Vertebrata</taxon>
        <taxon>Euteleostomi</taxon>
        <taxon>Mammalia</taxon>
        <taxon>Eutheria</taxon>
        <taxon>Euarchontoglires</taxon>
        <taxon>Primates</taxon>
        <taxon>Haplorrhini</taxon>
        <taxon>Catarrhini</taxon>
        <taxon>Hominidae</taxon>
        <taxon>Homo</taxon>
    </lineage>
</organism>
<protein>
    <recommendedName>
        <fullName>Zinc finger protein 529</fullName>
    </recommendedName>
</protein>